<proteinExistence type="inferred from homology"/>
<dbReference type="EMBL" id="CP000050">
    <property type="protein sequence ID" value="AAY51284.1"/>
    <property type="molecule type" value="Genomic_DNA"/>
</dbReference>
<dbReference type="RefSeq" id="WP_011039223.1">
    <property type="nucleotide sequence ID" value="NZ_CP155948.1"/>
</dbReference>
<dbReference type="SMR" id="Q4UNT9"/>
<dbReference type="KEGG" id="xcb:XC_4246"/>
<dbReference type="HOGENOM" id="CLU_099590_2_0_6"/>
<dbReference type="Proteomes" id="UP000000420">
    <property type="component" value="Chromosome"/>
</dbReference>
<dbReference type="Gene3D" id="3.10.450.50">
    <property type="match status" value="1"/>
</dbReference>
<dbReference type="HAMAP" id="MF_00612">
    <property type="entry name" value="UPF0225"/>
    <property type="match status" value="1"/>
</dbReference>
<dbReference type="InterPro" id="IPR032710">
    <property type="entry name" value="NTF2-like_dom_sf"/>
</dbReference>
<dbReference type="InterPro" id="IPR004027">
    <property type="entry name" value="SEC_C_motif"/>
</dbReference>
<dbReference type="InterPro" id="IPR023006">
    <property type="entry name" value="UPF0225"/>
</dbReference>
<dbReference type="InterPro" id="IPR048469">
    <property type="entry name" value="YchJ-like_M"/>
</dbReference>
<dbReference type="NCBIfam" id="NF003262">
    <property type="entry name" value="PRK04233.1"/>
    <property type="match status" value="1"/>
</dbReference>
<dbReference type="PANTHER" id="PTHR33747:SF1">
    <property type="entry name" value="ADENYLATE CYCLASE-ASSOCIATED CAP C-TERMINAL DOMAIN-CONTAINING PROTEIN"/>
    <property type="match status" value="1"/>
</dbReference>
<dbReference type="PANTHER" id="PTHR33747">
    <property type="entry name" value="UPF0225 PROTEIN SCO1677"/>
    <property type="match status" value="1"/>
</dbReference>
<dbReference type="Pfam" id="PF02810">
    <property type="entry name" value="SEC-C"/>
    <property type="match status" value="1"/>
</dbReference>
<dbReference type="Pfam" id="PF17775">
    <property type="entry name" value="YchJ_M-like"/>
    <property type="match status" value="1"/>
</dbReference>
<dbReference type="SUPFAM" id="SSF54427">
    <property type="entry name" value="NTF2-like"/>
    <property type="match status" value="1"/>
</dbReference>
<name>Y4246_XANC8</name>
<accession>Q4UNT9</accession>
<reference key="1">
    <citation type="journal article" date="2005" name="Genome Res.">
        <title>Comparative and functional genomic analyses of the pathogenicity of phytopathogen Xanthomonas campestris pv. campestris.</title>
        <authorList>
            <person name="Qian W."/>
            <person name="Jia Y."/>
            <person name="Ren S.-X."/>
            <person name="He Y.-Q."/>
            <person name="Feng J.-X."/>
            <person name="Lu L.-F."/>
            <person name="Sun Q."/>
            <person name="Ying G."/>
            <person name="Tang D.-J."/>
            <person name="Tang H."/>
            <person name="Wu W."/>
            <person name="Hao P."/>
            <person name="Wang L."/>
            <person name="Jiang B.-L."/>
            <person name="Zeng S."/>
            <person name="Gu W.-Y."/>
            <person name="Lu G."/>
            <person name="Rong L."/>
            <person name="Tian Y."/>
            <person name="Yao Z."/>
            <person name="Fu G."/>
            <person name="Chen B."/>
            <person name="Fang R."/>
            <person name="Qiang B."/>
            <person name="Chen Z."/>
            <person name="Zhao G.-P."/>
            <person name="Tang J.-L."/>
            <person name="He C."/>
        </authorList>
    </citation>
    <scope>NUCLEOTIDE SEQUENCE [LARGE SCALE GENOMIC DNA]</scope>
    <source>
        <strain>8004</strain>
    </source>
</reference>
<feature type="chain" id="PRO_1000056746" description="UPF0225 protein XC_4246">
    <location>
        <begin position="1"/>
        <end position="129"/>
    </location>
</feature>
<gene>
    <name type="ordered locus">XC_4246</name>
</gene>
<sequence length="129" mass="14155">MSPSTPTDPCPCGRAAGYAQCCGQYHAGAAAPDAETLMRARYSAYVRRNVDYLLASWHPSTRPAELALDEGGRTTWLGLNVQRAIATGADTAEVVFLARYRIGGGSAVRMTEHSRFVREDGHWYYLDAR</sequence>
<organism>
    <name type="scientific">Xanthomonas campestris pv. campestris (strain 8004)</name>
    <dbReference type="NCBI Taxonomy" id="314565"/>
    <lineage>
        <taxon>Bacteria</taxon>
        <taxon>Pseudomonadati</taxon>
        <taxon>Pseudomonadota</taxon>
        <taxon>Gammaproteobacteria</taxon>
        <taxon>Lysobacterales</taxon>
        <taxon>Lysobacteraceae</taxon>
        <taxon>Xanthomonas</taxon>
    </lineage>
</organism>
<comment type="similarity">
    <text evidence="1">Belongs to the UPF0225 family.</text>
</comment>
<evidence type="ECO:0000255" key="1">
    <source>
        <dbReference type="HAMAP-Rule" id="MF_00612"/>
    </source>
</evidence>
<protein>
    <recommendedName>
        <fullName evidence="1">UPF0225 protein XC_4246</fullName>
    </recommendedName>
</protein>